<sequence>MRSLPDIFYNFIHLQLYSLFSLLLVIISHNLGNTYPLIVRYLIQVITYNYQLFLYIIDWMVDIHGGINYSNR</sequence>
<feature type="chain" id="PRO_0000099703" description="Uncharacterized 8.6 kDa protein">
    <location>
        <begin position="1"/>
        <end position="72"/>
    </location>
</feature>
<accession>P68490</accession>
<accession>P04320</accession>
<proteinExistence type="predicted"/>
<reference key="1">
    <citation type="journal article" date="1986" name="Virology">
        <title>Nucleotide sequence and genetic map of the 16-kb vaccinia virus HindIII D fragment.</title>
        <authorList>
            <person name="Niles E.G."/>
            <person name="Condit R.C."/>
            <person name="Caro P."/>
            <person name="Davidson K."/>
            <person name="Matusick L."/>
            <person name="Seto J."/>
        </authorList>
    </citation>
    <scope>NUCLEOTIDE SEQUENCE [GENOMIC DNA]</scope>
</reference>
<protein>
    <recommendedName>
        <fullName>Uncharacterized 8.6 kDa protein</fullName>
    </recommendedName>
</protein>
<organism>
    <name type="scientific">Vaccinia virus (strain Western Reserve)</name>
    <name type="common">VACV</name>
    <name type="synonym">Vaccinia virus (strain WR)</name>
    <dbReference type="NCBI Taxonomy" id="10254"/>
    <lineage>
        <taxon>Viruses</taxon>
        <taxon>Varidnaviria</taxon>
        <taxon>Bamfordvirae</taxon>
        <taxon>Nucleocytoviricota</taxon>
        <taxon>Pokkesviricetes</taxon>
        <taxon>Chitovirales</taxon>
        <taxon>Poxviridae</taxon>
        <taxon>Chordopoxvirinae</taxon>
        <taxon>Orthopoxvirus</taxon>
        <taxon>Vaccinia virus</taxon>
    </lineage>
</organism>
<organismHost>
    <name type="scientific">Bos taurus</name>
    <name type="common">Bovine</name>
    <dbReference type="NCBI Taxonomy" id="9913"/>
</organismHost>
<name>YVD2_VACCW</name>
<dbReference type="EMBL" id="M15058">
    <property type="protein sequence ID" value="AAA48272.1"/>
    <property type="molecule type" value="Genomic_DNA"/>
</dbReference>
<dbReference type="PIR" id="A03894">
    <property type="entry name" value="QQVZ24"/>
</dbReference>
<dbReference type="SMR" id="P68490"/>